<name>OMPF_ECOL5</name>
<reference key="1">
    <citation type="journal article" date="2006" name="Mol. Microbiol.">
        <title>Role of pathogenicity island-associated integrases in the genome plasticity of uropathogenic Escherichia coli strain 536.</title>
        <authorList>
            <person name="Hochhut B."/>
            <person name="Wilde C."/>
            <person name="Balling G."/>
            <person name="Middendorf B."/>
            <person name="Dobrindt U."/>
            <person name="Brzuszkiewicz E."/>
            <person name="Gottschalk G."/>
            <person name="Carniel E."/>
            <person name="Hacker J."/>
        </authorList>
    </citation>
    <scope>NUCLEOTIDE SEQUENCE [LARGE SCALE GENOMIC DNA]</scope>
    <source>
        <strain>536 / UPEC</strain>
    </source>
</reference>
<reference key="2">
    <citation type="journal article" date="2016" name="PLoS Pathog.">
        <title>CdiA effectors from uropathogenic Escherichia coli use heterotrimeric osmoporins as receptors to recognize target bacteria.</title>
        <authorList>
            <person name="Beck C.M."/>
            <person name="Willett J.L."/>
            <person name="Cunningham D.A."/>
            <person name="Kim J.J."/>
            <person name="Low D.A."/>
            <person name="Hayes C.S."/>
        </authorList>
    </citation>
    <scope>FUNCTION (MICROBIAL INFECTION)</scope>
    <scope>SUBUNIT</scope>
    <source>
        <strain>K12</strain>
    </source>
</reference>
<evidence type="ECO:0000255" key="1"/>
<evidence type="ECO:0000269" key="2">
    <source>
    </source>
</evidence>
<evidence type="ECO:0000305" key="3"/>
<evidence type="ECO:0000305" key="4">
    <source>
    </source>
</evidence>
<dbReference type="EMBL" id="CP000247">
    <property type="protein sequence ID" value="ABG68955.1"/>
    <property type="molecule type" value="Genomic_DNA"/>
</dbReference>
<dbReference type="RefSeq" id="WP_000977927.1">
    <property type="nucleotide sequence ID" value="NC_008253.1"/>
</dbReference>
<dbReference type="SMR" id="P0DSD9"/>
<dbReference type="KEGG" id="ecp:ECP_0940"/>
<dbReference type="Proteomes" id="UP000009182">
    <property type="component" value="Chromosome"/>
</dbReference>
<dbReference type="GO" id="GO:0009279">
    <property type="term" value="C:cell outer membrane"/>
    <property type="evidence" value="ECO:0007669"/>
    <property type="project" value="UniProtKB-SubCell"/>
</dbReference>
<dbReference type="GO" id="GO:0015288">
    <property type="term" value="F:porin activity"/>
    <property type="evidence" value="ECO:0007669"/>
    <property type="project" value="InterPro"/>
</dbReference>
<dbReference type="GO" id="GO:0034220">
    <property type="term" value="P:monoatomic ion transmembrane transport"/>
    <property type="evidence" value="ECO:0007669"/>
    <property type="project" value="InterPro"/>
</dbReference>
<dbReference type="CDD" id="cd00342">
    <property type="entry name" value="gram_neg_porins"/>
    <property type="match status" value="1"/>
</dbReference>
<dbReference type="FunFam" id="2.40.160.10:FF:000002">
    <property type="entry name" value="Outer membrane porin F"/>
    <property type="match status" value="1"/>
</dbReference>
<dbReference type="Gene3D" id="2.40.160.10">
    <property type="entry name" value="Porin"/>
    <property type="match status" value="1"/>
</dbReference>
<dbReference type="InterPro" id="IPR050298">
    <property type="entry name" value="Gram-neg_bact_OMP"/>
</dbReference>
<dbReference type="InterPro" id="IPR033900">
    <property type="entry name" value="Gram_neg_porin_domain"/>
</dbReference>
<dbReference type="InterPro" id="IPR023614">
    <property type="entry name" value="Porin_dom_sf"/>
</dbReference>
<dbReference type="InterPro" id="IPR001897">
    <property type="entry name" value="Porin_gammaproteobac"/>
</dbReference>
<dbReference type="InterPro" id="IPR001702">
    <property type="entry name" value="Porin_Gram-ve"/>
</dbReference>
<dbReference type="InterPro" id="IPR013793">
    <property type="entry name" value="Porin_Gram-ve_CS"/>
</dbReference>
<dbReference type="NCBIfam" id="NF007446">
    <property type="entry name" value="PRK10002.1"/>
    <property type="match status" value="1"/>
</dbReference>
<dbReference type="PANTHER" id="PTHR34501:SF2">
    <property type="entry name" value="OUTER MEMBRANE PORIN F-RELATED"/>
    <property type="match status" value="1"/>
</dbReference>
<dbReference type="PANTHER" id="PTHR34501">
    <property type="entry name" value="PROTEIN YDDL-RELATED"/>
    <property type="match status" value="1"/>
</dbReference>
<dbReference type="Pfam" id="PF00267">
    <property type="entry name" value="Porin_1"/>
    <property type="match status" value="1"/>
</dbReference>
<dbReference type="PRINTS" id="PR00183">
    <property type="entry name" value="ECOLIPORIN"/>
</dbReference>
<dbReference type="PRINTS" id="PR00182">
    <property type="entry name" value="ECOLNEIPORIN"/>
</dbReference>
<dbReference type="SUPFAM" id="SSF56935">
    <property type="entry name" value="Porins"/>
    <property type="match status" value="1"/>
</dbReference>
<dbReference type="PROSITE" id="PS00576">
    <property type="entry name" value="GRAM_NEG_PORIN"/>
    <property type="match status" value="1"/>
</dbReference>
<accession>P0DSD9</accession>
<accession>A0A454A2T9</accession>
<comment type="function">
    <text evidence="3">Forms pores that allow passive diffusion of small molecules across the outer membrane.</text>
</comment>
<comment type="function">
    <text evidence="2">(Microbial infection) Is the major receptor for colicin E5.</text>
</comment>
<comment type="function">
    <text evidence="2">(Microbial infection) A mixed OmpC-OmpF heterotrimer is the outer membrane receptor for toxin CdiA-EC536.</text>
</comment>
<comment type="subunit">
    <text evidence="2 4">Homotrimer (Probable). Forms mixed heterotrimers with OmpC; other mixed heterotrimers are also probable (PubMed:27723824).</text>
</comment>
<comment type="subcellular location">
    <subcellularLocation>
        <location evidence="4">Cell outer membrane</location>
        <topology>Multi-pass membrane protein</topology>
    </subcellularLocation>
</comment>
<comment type="similarity">
    <text evidence="3">Belongs to the Gram-negative porin family.</text>
</comment>
<gene>
    <name type="primary">ompF</name>
    <name type="ordered locus">ECP_0940</name>
</gene>
<organism>
    <name type="scientific">Escherichia coli O6:K15:H31 (strain 536 / UPEC)</name>
    <dbReference type="NCBI Taxonomy" id="362663"/>
    <lineage>
        <taxon>Bacteria</taxon>
        <taxon>Pseudomonadati</taxon>
        <taxon>Pseudomonadota</taxon>
        <taxon>Gammaproteobacteria</taxon>
        <taxon>Enterobacterales</taxon>
        <taxon>Enterobacteriaceae</taxon>
        <taxon>Escherichia</taxon>
    </lineage>
</organism>
<keyword id="KW-0998">Cell outer membrane</keyword>
<keyword id="KW-0472">Membrane</keyword>
<keyword id="KW-0732">Signal</keyword>
<proteinExistence type="evidence at protein level"/>
<protein>
    <recommendedName>
        <fullName>Outer membrane porin F</fullName>
    </recommendedName>
    <alternativeName>
        <fullName>Outer membrane protein F</fullName>
    </alternativeName>
    <alternativeName>
        <fullName>Porin OmpF</fullName>
    </alternativeName>
</protein>
<feature type="signal peptide" evidence="1">
    <location>
        <begin position="1"/>
        <end position="22"/>
    </location>
</feature>
<feature type="chain" id="PRO_0000446879" description="Outer membrane porin F" evidence="1">
    <location>
        <begin position="23"/>
        <end position="362"/>
    </location>
</feature>
<sequence>MMKRNILAVIVPALLVAGTANAAEIYNKDGNKVDLYGKAVGLHYFSKGNGENSYGGNGDMTYARLGFKGETQINSDLTGYGQWEYNFQGNNSEGADAQTGNKTRLAFAGLKYADVGSFDYGRNYGVVYDALGYTDMLPEFGGDTAYSDDFFVGRVGGVATYRNSNFFGLVDGLNFAVQYLGKNERDTARRSNGDGVGGSISYEYEGFGIVGAYGAADRTNLQEESSLGKGKKAEQWATGLKYDANNIYLAANYGETRNATPITNKFTNTSGFANKTQDVLLVAQYQFDFGLRPSIAYTKSKAKDVEGIGDVDLVNYFEVGATYYFNKNMSTYVDYIINQIDSDNKLGVGSDDTVAVGIVYQF</sequence>